<reference key="1">
    <citation type="journal article" date="2006" name="J. Bacteriol.">
        <title>The genome sequence of the obligately chemolithoautotrophic, facultatively anaerobic bacterium Thiobacillus denitrificans.</title>
        <authorList>
            <person name="Beller H.R."/>
            <person name="Chain P.S."/>
            <person name="Letain T.E."/>
            <person name="Chakicherla A."/>
            <person name="Larimer F.W."/>
            <person name="Richardson P.M."/>
            <person name="Coleman M.A."/>
            <person name="Wood A.P."/>
            <person name="Kelly D.P."/>
        </authorList>
    </citation>
    <scope>NUCLEOTIDE SEQUENCE [LARGE SCALE GENOMIC DNA]</scope>
    <source>
        <strain>ATCC 25259 / T1</strain>
    </source>
</reference>
<feature type="chain" id="PRO_1000024695" description="ATP-dependent Clp protease ATP-binding subunit ClpX">
    <location>
        <begin position="1"/>
        <end position="423"/>
    </location>
</feature>
<feature type="domain" description="ClpX-type ZB" evidence="2">
    <location>
        <begin position="1"/>
        <end position="54"/>
    </location>
</feature>
<feature type="binding site" evidence="2">
    <location>
        <position position="13"/>
    </location>
    <ligand>
        <name>Zn(2+)</name>
        <dbReference type="ChEBI" id="CHEBI:29105"/>
    </ligand>
</feature>
<feature type="binding site" evidence="2">
    <location>
        <position position="16"/>
    </location>
    <ligand>
        <name>Zn(2+)</name>
        <dbReference type="ChEBI" id="CHEBI:29105"/>
    </ligand>
</feature>
<feature type="binding site" evidence="2">
    <location>
        <position position="35"/>
    </location>
    <ligand>
        <name>Zn(2+)</name>
        <dbReference type="ChEBI" id="CHEBI:29105"/>
    </ligand>
</feature>
<feature type="binding site" evidence="2">
    <location>
        <position position="38"/>
    </location>
    <ligand>
        <name>Zn(2+)</name>
        <dbReference type="ChEBI" id="CHEBI:29105"/>
    </ligand>
</feature>
<feature type="binding site" evidence="1">
    <location>
        <begin position="119"/>
        <end position="126"/>
    </location>
    <ligand>
        <name>ATP</name>
        <dbReference type="ChEBI" id="CHEBI:30616"/>
    </ligand>
</feature>
<proteinExistence type="inferred from homology"/>
<keyword id="KW-0067">ATP-binding</keyword>
<keyword id="KW-0143">Chaperone</keyword>
<keyword id="KW-0479">Metal-binding</keyword>
<keyword id="KW-0547">Nucleotide-binding</keyword>
<keyword id="KW-1185">Reference proteome</keyword>
<keyword id="KW-0862">Zinc</keyword>
<comment type="function">
    <text evidence="1">ATP-dependent specificity component of the Clp protease. It directs the protease to specific substrates. Can perform chaperone functions in the absence of ClpP.</text>
</comment>
<comment type="subunit">
    <text evidence="1">Component of the ClpX-ClpP complex. Forms a hexameric ring that, in the presence of ATP, binds to fourteen ClpP subunits assembled into a disk-like structure with a central cavity, resembling the structure of eukaryotic proteasomes.</text>
</comment>
<comment type="similarity">
    <text evidence="1">Belongs to the ClpX chaperone family.</text>
</comment>
<sequence>MADKGSGDKLLYCSFCGKSQHEVRKLIAGPSVFICDECVELCNDIIREEIQQADSQKGASSDLPTPHEISGILDQYVIGQGQAKKALAVAVYNHYKRLRSSSGSGDVELAKSNILLIGPTGSGKTLLAQTLARLLNVPFVIADATTLTEAGYVGEDVENIIQKLLQKCDYDVDKAKQGIVYIDEIDKISRKADNPSITRDVSGEGVQQALLKLIEGTTASVPPQGGRKHPNQEFVQVDTSNILFICGGAFSGLEKVIRGRTEKGGIGFGAQVKNVDENKRDAELLHQVEPEDLIKYGLIPEFVGRLPVVATLDELDEAALVQILTEPKNALTKQFAKLFKMEGVDLEFRDDALNAIAKRALLRRTGARGLRSIIEHALLDTMYDLPSLKGVSKVVVDNALISGEGQPLLIYSEQGDQPLAAGA</sequence>
<gene>
    <name evidence="1" type="primary">clpX</name>
    <name type="ordered locus">Tbd_1676</name>
</gene>
<organism>
    <name type="scientific">Thiobacillus denitrificans (strain ATCC 25259 / T1)</name>
    <dbReference type="NCBI Taxonomy" id="292415"/>
    <lineage>
        <taxon>Bacteria</taxon>
        <taxon>Pseudomonadati</taxon>
        <taxon>Pseudomonadota</taxon>
        <taxon>Betaproteobacteria</taxon>
        <taxon>Nitrosomonadales</taxon>
        <taxon>Thiobacillaceae</taxon>
        <taxon>Thiobacillus</taxon>
    </lineage>
</organism>
<evidence type="ECO:0000255" key="1">
    <source>
        <dbReference type="HAMAP-Rule" id="MF_00175"/>
    </source>
</evidence>
<evidence type="ECO:0000255" key="2">
    <source>
        <dbReference type="PROSITE-ProRule" id="PRU01250"/>
    </source>
</evidence>
<dbReference type="EMBL" id="CP000116">
    <property type="protein sequence ID" value="AAZ97629.1"/>
    <property type="molecule type" value="Genomic_DNA"/>
</dbReference>
<dbReference type="RefSeq" id="WP_011312188.1">
    <property type="nucleotide sequence ID" value="NC_007404.1"/>
</dbReference>
<dbReference type="SMR" id="Q3SI99"/>
<dbReference type="STRING" id="292415.Tbd_1676"/>
<dbReference type="KEGG" id="tbd:Tbd_1676"/>
<dbReference type="eggNOG" id="COG1219">
    <property type="taxonomic scope" value="Bacteria"/>
</dbReference>
<dbReference type="HOGENOM" id="CLU_014218_8_2_4"/>
<dbReference type="OrthoDB" id="9804062at2"/>
<dbReference type="Proteomes" id="UP000008291">
    <property type="component" value="Chromosome"/>
</dbReference>
<dbReference type="GO" id="GO:0009376">
    <property type="term" value="C:HslUV protease complex"/>
    <property type="evidence" value="ECO:0007669"/>
    <property type="project" value="TreeGrafter"/>
</dbReference>
<dbReference type="GO" id="GO:0005524">
    <property type="term" value="F:ATP binding"/>
    <property type="evidence" value="ECO:0007669"/>
    <property type="project" value="UniProtKB-UniRule"/>
</dbReference>
<dbReference type="GO" id="GO:0016887">
    <property type="term" value="F:ATP hydrolysis activity"/>
    <property type="evidence" value="ECO:0007669"/>
    <property type="project" value="InterPro"/>
</dbReference>
<dbReference type="GO" id="GO:0140662">
    <property type="term" value="F:ATP-dependent protein folding chaperone"/>
    <property type="evidence" value="ECO:0007669"/>
    <property type="project" value="InterPro"/>
</dbReference>
<dbReference type="GO" id="GO:0046983">
    <property type="term" value="F:protein dimerization activity"/>
    <property type="evidence" value="ECO:0007669"/>
    <property type="project" value="InterPro"/>
</dbReference>
<dbReference type="GO" id="GO:0051082">
    <property type="term" value="F:unfolded protein binding"/>
    <property type="evidence" value="ECO:0007669"/>
    <property type="project" value="UniProtKB-UniRule"/>
</dbReference>
<dbReference type="GO" id="GO:0008270">
    <property type="term" value="F:zinc ion binding"/>
    <property type="evidence" value="ECO:0007669"/>
    <property type="project" value="InterPro"/>
</dbReference>
<dbReference type="GO" id="GO:0051301">
    <property type="term" value="P:cell division"/>
    <property type="evidence" value="ECO:0007669"/>
    <property type="project" value="TreeGrafter"/>
</dbReference>
<dbReference type="GO" id="GO:0051603">
    <property type="term" value="P:proteolysis involved in protein catabolic process"/>
    <property type="evidence" value="ECO:0007669"/>
    <property type="project" value="TreeGrafter"/>
</dbReference>
<dbReference type="CDD" id="cd19497">
    <property type="entry name" value="RecA-like_ClpX"/>
    <property type="match status" value="1"/>
</dbReference>
<dbReference type="FunFam" id="1.10.8.60:FF:000002">
    <property type="entry name" value="ATP-dependent Clp protease ATP-binding subunit ClpX"/>
    <property type="match status" value="1"/>
</dbReference>
<dbReference type="FunFam" id="3.40.50.300:FF:000005">
    <property type="entry name" value="ATP-dependent Clp protease ATP-binding subunit ClpX"/>
    <property type="match status" value="1"/>
</dbReference>
<dbReference type="Gene3D" id="1.10.8.60">
    <property type="match status" value="1"/>
</dbReference>
<dbReference type="Gene3D" id="6.20.220.10">
    <property type="entry name" value="ClpX chaperone, C4-type zinc finger domain"/>
    <property type="match status" value="1"/>
</dbReference>
<dbReference type="Gene3D" id="3.40.50.300">
    <property type="entry name" value="P-loop containing nucleotide triphosphate hydrolases"/>
    <property type="match status" value="1"/>
</dbReference>
<dbReference type="HAMAP" id="MF_00175">
    <property type="entry name" value="ClpX"/>
    <property type="match status" value="1"/>
</dbReference>
<dbReference type="InterPro" id="IPR003593">
    <property type="entry name" value="AAA+_ATPase"/>
</dbReference>
<dbReference type="InterPro" id="IPR050052">
    <property type="entry name" value="ATP-dep_Clp_protease_ClpX"/>
</dbReference>
<dbReference type="InterPro" id="IPR003959">
    <property type="entry name" value="ATPase_AAA_core"/>
</dbReference>
<dbReference type="InterPro" id="IPR019489">
    <property type="entry name" value="Clp_ATPase_C"/>
</dbReference>
<dbReference type="InterPro" id="IPR004487">
    <property type="entry name" value="Clp_protease_ATP-bd_su_ClpX"/>
</dbReference>
<dbReference type="InterPro" id="IPR046425">
    <property type="entry name" value="ClpX_bact"/>
</dbReference>
<dbReference type="InterPro" id="IPR027417">
    <property type="entry name" value="P-loop_NTPase"/>
</dbReference>
<dbReference type="InterPro" id="IPR010603">
    <property type="entry name" value="Znf_CppX_C4"/>
</dbReference>
<dbReference type="InterPro" id="IPR038366">
    <property type="entry name" value="Znf_CppX_C4_sf"/>
</dbReference>
<dbReference type="NCBIfam" id="TIGR00382">
    <property type="entry name" value="clpX"/>
    <property type="match status" value="1"/>
</dbReference>
<dbReference type="NCBIfam" id="NF003745">
    <property type="entry name" value="PRK05342.1"/>
    <property type="match status" value="1"/>
</dbReference>
<dbReference type="PANTHER" id="PTHR48102:SF7">
    <property type="entry name" value="ATP-DEPENDENT CLP PROTEASE ATP-BINDING SUBUNIT CLPX-LIKE, MITOCHONDRIAL"/>
    <property type="match status" value="1"/>
</dbReference>
<dbReference type="PANTHER" id="PTHR48102">
    <property type="entry name" value="ATP-DEPENDENT CLP PROTEASE ATP-BINDING SUBUNIT CLPX-LIKE, MITOCHONDRIAL-RELATED"/>
    <property type="match status" value="1"/>
</dbReference>
<dbReference type="Pfam" id="PF07724">
    <property type="entry name" value="AAA_2"/>
    <property type="match status" value="1"/>
</dbReference>
<dbReference type="Pfam" id="PF10431">
    <property type="entry name" value="ClpB_D2-small"/>
    <property type="match status" value="1"/>
</dbReference>
<dbReference type="Pfam" id="PF06689">
    <property type="entry name" value="zf-C4_ClpX"/>
    <property type="match status" value="1"/>
</dbReference>
<dbReference type="SMART" id="SM00382">
    <property type="entry name" value="AAA"/>
    <property type="match status" value="1"/>
</dbReference>
<dbReference type="SMART" id="SM01086">
    <property type="entry name" value="ClpB_D2-small"/>
    <property type="match status" value="1"/>
</dbReference>
<dbReference type="SMART" id="SM00994">
    <property type="entry name" value="zf-C4_ClpX"/>
    <property type="match status" value="1"/>
</dbReference>
<dbReference type="SUPFAM" id="SSF57716">
    <property type="entry name" value="Glucocorticoid receptor-like (DNA-binding domain)"/>
    <property type="match status" value="1"/>
</dbReference>
<dbReference type="SUPFAM" id="SSF52540">
    <property type="entry name" value="P-loop containing nucleoside triphosphate hydrolases"/>
    <property type="match status" value="1"/>
</dbReference>
<dbReference type="PROSITE" id="PS51902">
    <property type="entry name" value="CLPX_ZB"/>
    <property type="match status" value="1"/>
</dbReference>
<protein>
    <recommendedName>
        <fullName evidence="1">ATP-dependent Clp protease ATP-binding subunit ClpX</fullName>
    </recommendedName>
</protein>
<name>CLPX_THIDA</name>
<accession>Q3SI99</accession>